<evidence type="ECO:0000255" key="1">
    <source>
        <dbReference type="HAMAP-Rule" id="MF_01178"/>
    </source>
</evidence>
<feature type="chain" id="PRO_1000213753" description="Sigma factor-binding protein Crl">
    <location>
        <begin position="1"/>
        <end position="133"/>
    </location>
</feature>
<feature type="region of interest" description="Essential for activity" evidence="1">
    <location>
        <begin position="99"/>
        <end position="122"/>
    </location>
</feature>
<feature type="coiled-coil region" evidence="1">
    <location>
        <begin position="90"/>
        <end position="116"/>
    </location>
</feature>
<dbReference type="EMBL" id="CP001396">
    <property type="protein sequence ID" value="ACR62951.1"/>
    <property type="molecule type" value="Genomic_DNA"/>
</dbReference>
<dbReference type="RefSeq" id="WP_000174689.1">
    <property type="nucleotide sequence ID" value="NC_012759.1"/>
</dbReference>
<dbReference type="SMR" id="C4ZT97"/>
<dbReference type="KEGG" id="ebw:BWG_0222"/>
<dbReference type="HOGENOM" id="CLU_136773_0_0_6"/>
<dbReference type="GO" id="GO:0005737">
    <property type="term" value="C:cytoplasm"/>
    <property type="evidence" value="ECO:0007669"/>
    <property type="project" value="UniProtKB-SubCell"/>
</dbReference>
<dbReference type="GO" id="GO:0045893">
    <property type="term" value="P:positive regulation of DNA-templated transcription"/>
    <property type="evidence" value="ECO:0007669"/>
    <property type="project" value="UniProtKB-UniRule"/>
</dbReference>
<dbReference type="FunFam" id="3.30.310.230:FF:000001">
    <property type="entry name" value="Sigma factor-binding protein Crl"/>
    <property type="match status" value="1"/>
</dbReference>
<dbReference type="Gene3D" id="3.30.310.230">
    <property type="entry name" value="Sigma factor-binding protein Crl monomer"/>
    <property type="match status" value="1"/>
</dbReference>
<dbReference type="HAMAP" id="MF_01178">
    <property type="entry name" value="Crl"/>
    <property type="match status" value="1"/>
</dbReference>
<dbReference type="InterPro" id="IPR009986">
    <property type="entry name" value="Tscrpt_reg_Crl"/>
</dbReference>
<dbReference type="InterPro" id="IPR038208">
    <property type="entry name" value="Tscrpt_reg_Crl_sf"/>
</dbReference>
<dbReference type="NCBIfam" id="NF008217">
    <property type="entry name" value="PRK10984.1"/>
    <property type="match status" value="1"/>
</dbReference>
<dbReference type="Pfam" id="PF07417">
    <property type="entry name" value="Crl"/>
    <property type="match status" value="1"/>
</dbReference>
<accession>C4ZT97</accession>
<keyword id="KW-0010">Activator</keyword>
<keyword id="KW-0175">Coiled coil</keyword>
<keyword id="KW-0963">Cytoplasm</keyword>
<keyword id="KW-0804">Transcription</keyword>
<keyword id="KW-0805">Transcription regulation</keyword>
<comment type="function">
    <text evidence="1">Binds to the sigma-S subunit of RNA polymerase, activating expression of sigma-S-regulated genes. Stimulates RNA polymerase holoenzyme formation and may bind to several other sigma factors, such as sigma-70 and sigma-32.</text>
</comment>
<comment type="subcellular location">
    <subcellularLocation>
        <location evidence="1">Cytoplasm</location>
    </subcellularLocation>
</comment>
<comment type="similarity">
    <text evidence="1">Belongs to the Crl family.</text>
</comment>
<reference key="1">
    <citation type="journal article" date="2009" name="J. Bacteriol.">
        <title>Genomic sequencing reveals regulatory mutations and recombinational events in the widely used MC4100 lineage of Escherichia coli K-12.</title>
        <authorList>
            <person name="Ferenci T."/>
            <person name="Zhou Z."/>
            <person name="Betteridge T."/>
            <person name="Ren Y."/>
            <person name="Liu Y."/>
            <person name="Feng L."/>
            <person name="Reeves P.R."/>
            <person name="Wang L."/>
        </authorList>
    </citation>
    <scope>NUCLEOTIDE SEQUENCE [LARGE SCALE GENOMIC DNA]</scope>
    <source>
        <strain>K12 / MC4100 / BW2952</strain>
    </source>
</reference>
<gene>
    <name evidence="1" type="primary">crl</name>
    <name type="ordered locus">BWG_0222</name>
</gene>
<protein>
    <recommendedName>
        <fullName evidence="1">Sigma factor-binding protein Crl</fullName>
    </recommendedName>
</protein>
<proteinExistence type="inferred from homology"/>
<name>CRL_ECOBW</name>
<sequence length="133" mass="15655">MTLPSGHPKSRLIKKFTALGPYIREGKCKDNRFFFDCLAVCVNVKPAPEVREFWGWWMELEAQESRFTYSYQFGLFDKAGDWKSVPVKDTEVVERLEHTLREFHEKLRELLTTLNLKLEPADDFRDEPVKLTA</sequence>
<organism>
    <name type="scientific">Escherichia coli (strain K12 / MC4100 / BW2952)</name>
    <dbReference type="NCBI Taxonomy" id="595496"/>
    <lineage>
        <taxon>Bacteria</taxon>
        <taxon>Pseudomonadati</taxon>
        <taxon>Pseudomonadota</taxon>
        <taxon>Gammaproteobacteria</taxon>
        <taxon>Enterobacterales</taxon>
        <taxon>Enterobacteriaceae</taxon>
        <taxon>Escherichia</taxon>
    </lineage>
</organism>